<comment type="function">
    <text evidence="1">RNaseP catalyzes the removal of the 5'-leader sequence from pre-tRNA to produce the mature 5'-terminus. It can also cleave other RNA substrates such as 4.5S RNA. The protein component plays an auxiliary but essential role in vivo by binding to the 5'-leader sequence and broadening the substrate specificity of the ribozyme.</text>
</comment>
<comment type="catalytic activity">
    <reaction evidence="1">
        <text>Endonucleolytic cleavage of RNA, removing 5'-extranucleotides from tRNA precursor.</text>
        <dbReference type="EC" id="3.1.26.5"/>
    </reaction>
</comment>
<comment type="subunit">
    <text evidence="1">Consists of a catalytic RNA component (M1 or rnpB) and a protein subunit.</text>
</comment>
<comment type="similarity">
    <text evidence="1">Belongs to the RnpA family.</text>
</comment>
<name>RNPA_DESDA</name>
<keyword id="KW-0255">Endonuclease</keyword>
<keyword id="KW-0378">Hydrolase</keyword>
<keyword id="KW-0540">Nuclease</keyword>
<keyword id="KW-0694">RNA-binding</keyword>
<keyword id="KW-0819">tRNA processing</keyword>
<gene>
    <name evidence="1" type="primary">rnpA</name>
    <name type="ordered locus">Ddes_1969</name>
</gene>
<evidence type="ECO:0000255" key="1">
    <source>
        <dbReference type="HAMAP-Rule" id="MF_00227"/>
    </source>
</evidence>
<proteinExistence type="inferred from homology"/>
<organism>
    <name type="scientific">Desulfovibrio desulfuricans (strain ATCC 27774 / DSM 6949 / MB)</name>
    <dbReference type="NCBI Taxonomy" id="525146"/>
    <lineage>
        <taxon>Bacteria</taxon>
        <taxon>Pseudomonadati</taxon>
        <taxon>Thermodesulfobacteriota</taxon>
        <taxon>Desulfovibrionia</taxon>
        <taxon>Desulfovibrionales</taxon>
        <taxon>Desulfovibrionaceae</taxon>
        <taxon>Desulfovibrio</taxon>
    </lineage>
</organism>
<accession>B8J2U6</accession>
<feature type="chain" id="PRO_1000194632" description="Ribonuclease P protein component">
    <location>
        <begin position="1"/>
        <end position="130"/>
    </location>
</feature>
<protein>
    <recommendedName>
        <fullName evidence="1">Ribonuclease P protein component</fullName>
        <shortName evidence="1">RNase P protein</shortName>
        <shortName evidence="1">RNaseP protein</shortName>
        <ecNumber evidence="1">3.1.26.5</ecNumber>
    </recommendedName>
    <alternativeName>
        <fullName evidence="1">Protein C5</fullName>
    </alternativeName>
</protein>
<sequence length="130" mass="15111">MRRYLLPRQLRIRRRVEFTACYERGRRYHTEHFLVFVLPRACPGLRARTGMAVSRKVGKAVVRNRVKRLLREFYRLHREELPVEADIVTVAKKHAGEAALDYARVAAELLPLLRRMARHLPGSSALDGLP</sequence>
<dbReference type="EC" id="3.1.26.5" evidence="1"/>
<dbReference type="EMBL" id="CP001358">
    <property type="protein sequence ID" value="ACL49865.1"/>
    <property type="molecule type" value="Genomic_DNA"/>
</dbReference>
<dbReference type="SMR" id="B8J2U6"/>
<dbReference type="STRING" id="525146.Ddes_1969"/>
<dbReference type="KEGG" id="dds:Ddes_1969"/>
<dbReference type="eggNOG" id="COG0594">
    <property type="taxonomic scope" value="Bacteria"/>
</dbReference>
<dbReference type="HOGENOM" id="CLU_117179_9_2_7"/>
<dbReference type="GO" id="GO:0030677">
    <property type="term" value="C:ribonuclease P complex"/>
    <property type="evidence" value="ECO:0007669"/>
    <property type="project" value="TreeGrafter"/>
</dbReference>
<dbReference type="GO" id="GO:0042781">
    <property type="term" value="F:3'-tRNA processing endoribonuclease activity"/>
    <property type="evidence" value="ECO:0007669"/>
    <property type="project" value="TreeGrafter"/>
</dbReference>
<dbReference type="GO" id="GO:0004526">
    <property type="term" value="F:ribonuclease P activity"/>
    <property type="evidence" value="ECO:0007669"/>
    <property type="project" value="UniProtKB-UniRule"/>
</dbReference>
<dbReference type="GO" id="GO:0000049">
    <property type="term" value="F:tRNA binding"/>
    <property type="evidence" value="ECO:0007669"/>
    <property type="project" value="UniProtKB-UniRule"/>
</dbReference>
<dbReference type="GO" id="GO:0001682">
    <property type="term" value="P:tRNA 5'-leader removal"/>
    <property type="evidence" value="ECO:0007669"/>
    <property type="project" value="UniProtKB-UniRule"/>
</dbReference>
<dbReference type="Gene3D" id="3.30.230.10">
    <property type="match status" value="1"/>
</dbReference>
<dbReference type="HAMAP" id="MF_00227">
    <property type="entry name" value="RNase_P"/>
    <property type="match status" value="1"/>
</dbReference>
<dbReference type="InterPro" id="IPR020568">
    <property type="entry name" value="Ribosomal_Su5_D2-typ_SF"/>
</dbReference>
<dbReference type="InterPro" id="IPR014721">
    <property type="entry name" value="Ribsml_uS5_D2-typ_fold_subgr"/>
</dbReference>
<dbReference type="InterPro" id="IPR000100">
    <property type="entry name" value="RNase_P"/>
</dbReference>
<dbReference type="InterPro" id="IPR020539">
    <property type="entry name" value="RNase_P_CS"/>
</dbReference>
<dbReference type="NCBIfam" id="TIGR00188">
    <property type="entry name" value="rnpA"/>
    <property type="match status" value="1"/>
</dbReference>
<dbReference type="PANTHER" id="PTHR33992">
    <property type="entry name" value="RIBONUCLEASE P PROTEIN COMPONENT"/>
    <property type="match status" value="1"/>
</dbReference>
<dbReference type="PANTHER" id="PTHR33992:SF1">
    <property type="entry name" value="RIBONUCLEASE P PROTEIN COMPONENT"/>
    <property type="match status" value="1"/>
</dbReference>
<dbReference type="Pfam" id="PF00825">
    <property type="entry name" value="Ribonuclease_P"/>
    <property type="match status" value="1"/>
</dbReference>
<dbReference type="SUPFAM" id="SSF54211">
    <property type="entry name" value="Ribosomal protein S5 domain 2-like"/>
    <property type="match status" value="1"/>
</dbReference>
<dbReference type="PROSITE" id="PS00648">
    <property type="entry name" value="RIBONUCLEASE_P"/>
    <property type="match status" value="1"/>
</dbReference>
<reference key="1">
    <citation type="submission" date="2009-01" db="EMBL/GenBank/DDBJ databases">
        <title>Complete sequence of Desulfovibrio desulfuricans subsp. desulfuricans str. ATCC 27774.</title>
        <authorList>
            <consortium name="US DOE Joint Genome Institute"/>
            <person name="Lucas S."/>
            <person name="Copeland A."/>
            <person name="Lapidus A."/>
            <person name="Glavina del Rio T."/>
            <person name="Tice H."/>
            <person name="Bruce D."/>
            <person name="Goodwin L."/>
            <person name="Pitluck S."/>
            <person name="Sims D."/>
            <person name="Lu M."/>
            <person name="Kiss H."/>
            <person name="Meineke L."/>
            <person name="Brettin T."/>
            <person name="Detter J.C."/>
            <person name="Han C."/>
            <person name="Larimer F."/>
            <person name="Land M."/>
            <person name="Hauser L."/>
            <person name="Kyrpides N."/>
            <person name="Ovchinnikova G."/>
            <person name="Hazen T.C."/>
        </authorList>
    </citation>
    <scope>NUCLEOTIDE SEQUENCE [LARGE SCALE GENOMIC DNA]</scope>
    <source>
        <strain>ATCC 27774 / DSM 6949 / MB</strain>
    </source>
</reference>